<reference key="1">
    <citation type="journal article" date="1998" name="Nature">
        <title>The genome sequence of Rickettsia prowazekii and the origin of mitochondria.</title>
        <authorList>
            <person name="Andersson S.G.E."/>
            <person name="Zomorodipour A."/>
            <person name="Andersson J.O."/>
            <person name="Sicheritz-Ponten T."/>
            <person name="Alsmark U.C.M."/>
            <person name="Podowski R.M."/>
            <person name="Naeslund A.K."/>
            <person name="Eriksson A.-S."/>
            <person name="Winkler H.H."/>
            <person name="Kurland C.G."/>
        </authorList>
    </citation>
    <scope>NUCLEOTIDE SEQUENCE [LARGE SCALE GENOMIC DNA]</scope>
    <source>
        <strain>Madrid E</strain>
    </source>
</reference>
<keyword id="KW-0012">Acyltransferase</keyword>
<keyword id="KW-0028">Amino-acid biosynthesis</keyword>
<keyword id="KW-0963">Cytoplasm</keyword>
<keyword id="KW-0220">Diaminopimelate biosynthesis</keyword>
<keyword id="KW-0457">Lysine biosynthesis</keyword>
<keyword id="KW-1185">Reference proteome</keyword>
<keyword id="KW-0677">Repeat</keyword>
<keyword id="KW-0808">Transferase</keyword>
<protein>
    <recommendedName>
        <fullName evidence="1">2,3,4,5-tetrahydropyridine-2,6-dicarboxylate N-succinyltransferase</fullName>
        <ecNumber evidence="1">2.3.1.117</ecNumber>
    </recommendedName>
    <alternativeName>
        <fullName evidence="1">Tetrahydrodipicolinate N-succinyltransferase</fullName>
        <shortName evidence="1">THDP succinyltransferase</shortName>
        <shortName evidence="1">THP succinyltransferase</shortName>
        <shortName evidence="1">Tetrahydropicolinate succinylase</shortName>
    </alternativeName>
</protein>
<comment type="catalytic activity">
    <reaction evidence="1">
        <text>(S)-2,3,4,5-tetrahydrodipicolinate + succinyl-CoA + H2O = (S)-2-succinylamino-6-oxoheptanedioate + CoA</text>
        <dbReference type="Rhea" id="RHEA:17325"/>
        <dbReference type="ChEBI" id="CHEBI:15377"/>
        <dbReference type="ChEBI" id="CHEBI:15685"/>
        <dbReference type="ChEBI" id="CHEBI:16845"/>
        <dbReference type="ChEBI" id="CHEBI:57287"/>
        <dbReference type="ChEBI" id="CHEBI:57292"/>
        <dbReference type="EC" id="2.3.1.117"/>
    </reaction>
</comment>
<comment type="pathway">
    <text evidence="1">Amino-acid biosynthesis; L-lysine biosynthesis via DAP pathway; LL-2,6-diaminopimelate from (S)-tetrahydrodipicolinate (succinylase route): step 1/3.</text>
</comment>
<comment type="subunit">
    <text evidence="1">Homotrimer.</text>
</comment>
<comment type="subcellular location">
    <subcellularLocation>
        <location evidence="1">Cytoplasm</location>
    </subcellularLocation>
</comment>
<comment type="similarity">
    <text evidence="1">Belongs to the transferase hexapeptide repeat family.</text>
</comment>
<name>DAPD_RICPR</name>
<accession>Q9ZDX0</accession>
<feature type="chain" id="PRO_0000196964" description="2,3,4,5-tetrahydropyridine-2,6-dicarboxylate N-succinyltransferase">
    <location>
        <begin position="1"/>
        <end position="274"/>
    </location>
</feature>
<feature type="binding site" evidence="1">
    <location>
        <position position="106"/>
    </location>
    <ligand>
        <name>substrate</name>
    </ligand>
</feature>
<feature type="binding site" evidence="1">
    <location>
        <position position="143"/>
    </location>
    <ligand>
        <name>substrate</name>
    </ligand>
</feature>
<evidence type="ECO:0000255" key="1">
    <source>
        <dbReference type="HAMAP-Rule" id="MF_00811"/>
    </source>
</evidence>
<sequence length="274" mass="30150">MSYIIKEIEEAWQIKENILHDSSKLIKLKKILNESIASLNQGIIRVCEKQGNQWKVNEWVKKAILLYFITTESQLYNNNYNSWYDKVAPKFPADTDKNIFKEAAIRKVPGAIVRTGTYIAKNVVIMPSFINIGAYIDEGTMIDTWATIGSCAQIGKNCHISGGAGIGGVLEPLQAKPVIIEDNCFVGARSEIAEGVIVEEGSVISMGVFIGSSTKIVYRDTGEIIYGRIPAYSVVVPGILPPPEVGKPGLYCVVIVKQVDKTTRGKVSINDLLR</sequence>
<dbReference type="EC" id="2.3.1.117" evidence="1"/>
<dbReference type="EMBL" id="AJ235270">
    <property type="protein sequence ID" value="CAA14660.1"/>
    <property type="molecule type" value="Genomic_DNA"/>
</dbReference>
<dbReference type="PIR" id="E71730">
    <property type="entry name" value="E71730"/>
</dbReference>
<dbReference type="RefSeq" id="NP_220583.1">
    <property type="nucleotide sequence ID" value="NC_000963.1"/>
</dbReference>
<dbReference type="RefSeq" id="WP_004595953.1">
    <property type="nucleotide sequence ID" value="NC_000963.1"/>
</dbReference>
<dbReference type="SMR" id="Q9ZDX0"/>
<dbReference type="STRING" id="272947.gene:17555276"/>
<dbReference type="EnsemblBacteria" id="CAA14660">
    <property type="protein sequence ID" value="CAA14660"/>
    <property type="gene ID" value="CAA14660"/>
</dbReference>
<dbReference type="GeneID" id="57569321"/>
<dbReference type="KEGG" id="rpr:RP194"/>
<dbReference type="PATRIC" id="fig|272947.5.peg.201"/>
<dbReference type="eggNOG" id="COG2171">
    <property type="taxonomic scope" value="Bacteria"/>
</dbReference>
<dbReference type="HOGENOM" id="CLU_050859_0_1_5"/>
<dbReference type="OrthoDB" id="9775362at2"/>
<dbReference type="UniPathway" id="UPA00034">
    <property type="reaction ID" value="UER00019"/>
</dbReference>
<dbReference type="Proteomes" id="UP000002480">
    <property type="component" value="Chromosome"/>
</dbReference>
<dbReference type="GO" id="GO:0005737">
    <property type="term" value="C:cytoplasm"/>
    <property type="evidence" value="ECO:0007669"/>
    <property type="project" value="UniProtKB-SubCell"/>
</dbReference>
<dbReference type="GO" id="GO:0008666">
    <property type="term" value="F:2,3,4,5-tetrahydropyridine-2,6-dicarboxylate N-succinyltransferase activity"/>
    <property type="evidence" value="ECO:0007669"/>
    <property type="project" value="UniProtKB-UniRule"/>
</dbReference>
<dbReference type="GO" id="GO:0019877">
    <property type="term" value="P:diaminopimelate biosynthetic process"/>
    <property type="evidence" value="ECO:0007669"/>
    <property type="project" value="UniProtKB-UniRule"/>
</dbReference>
<dbReference type="GO" id="GO:0009089">
    <property type="term" value="P:lysine biosynthetic process via diaminopimelate"/>
    <property type="evidence" value="ECO:0007669"/>
    <property type="project" value="UniProtKB-UniRule"/>
</dbReference>
<dbReference type="CDD" id="cd03350">
    <property type="entry name" value="LbH_THP_succinylT"/>
    <property type="match status" value="1"/>
</dbReference>
<dbReference type="Gene3D" id="2.160.10.10">
    <property type="entry name" value="Hexapeptide repeat proteins"/>
    <property type="match status" value="1"/>
</dbReference>
<dbReference type="Gene3D" id="1.10.166.10">
    <property type="entry name" value="Tetrahydrodipicolinate-N-succinyltransferase, N-terminal domain"/>
    <property type="match status" value="1"/>
</dbReference>
<dbReference type="HAMAP" id="MF_00811">
    <property type="entry name" value="DapD"/>
    <property type="match status" value="1"/>
</dbReference>
<dbReference type="InterPro" id="IPR005664">
    <property type="entry name" value="DapD_Trfase_Hexpep_rpt_fam"/>
</dbReference>
<dbReference type="InterPro" id="IPR001451">
    <property type="entry name" value="Hexapep"/>
</dbReference>
<dbReference type="InterPro" id="IPR023180">
    <property type="entry name" value="THP_succinylTrfase_dom1"/>
</dbReference>
<dbReference type="InterPro" id="IPR037133">
    <property type="entry name" value="THP_succinylTrfase_N_sf"/>
</dbReference>
<dbReference type="InterPro" id="IPR050179">
    <property type="entry name" value="Trans_hexapeptide_repeat"/>
</dbReference>
<dbReference type="InterPro" id="IPR011004">
    <property type="entry name" value="Trimer_LpxA-like_sf"/>
</dbReference>
<dbReference type="NCBIfam" id="TIGR00965">
    <property type="entry name" value="dapD"/>
    <property type="match status" value="1"/>
</dbReference>
<dbReference type="NCBIfam" id="NF008808">
    <property type="entry name" value="PRK11830.1"/>
    <property type="match status" value="1"/>
</dbReference>
<dbReference type="PANTHER" id="PTHR43300:SF10">
    <property type="entry name" value="2,3,4,5-TETRAHYDROPYRIDINE-2,6-DICARBOXYLATE N-ACETYLTRANSFERASE"/>
    <property type="match status" value="1"/>
</dbReference>
<dbReference type="PANTHER" id="PTHR43300">
    <property type="entry name" value="ACETYLTRANSFERASE"/>
    <property type="match status" value="1"/>
</dbReference>
<dbReference type="Pfam" id="PF00132">
    <property type="entry name" value="Hexapep"/>
    <property type="match status" value="1"/>
</dbReference>
<dbReference type="Pfam" id="PF14602">
    <property type="entry name" value="Hexapep_2"/>
    <property type="match status" value="1"/>
</dbReference>
<dbReference type="Pfam" id="PF14805">
    <property type="entry name" value="THDPS_N_2"/>
    <property type="match status" value="1"/>
</dbReference>
<dbReference type="SUPFAM" id="SSF51161">
    <property type="entry name" value="Trimeric LpxA-like enzymes"/>
    <property type="match status" value="1"/>
</dbReference>
<gene>
    <name evidence="1" type="primary">dapD</name>
    <name type="ordered locus">RP194</name>
</gene>
<organism>
    <name type="scientific">Rickettsia prowazekii (strain Madrid E)</name>
    <dbReference type="NCBI Taxonomy" id="272947"/>
    <lineage>
        <taxon>Bacteria</taxon>
        <taxon>Pseudomonadati</taxon>
        <taxon>Pseudomonadota</taxon>
        <taxon>Alphaproteobacteria</taxon>
        <taxon>Rickettsiales</taxon>
        <taxon>Rickettsiaceae</taxon>
        <taxon>Rickettsieae</taxon>
        <taxon>Rickettsia</taxon>
        <taxon>typhus group</taxon>
    </lineage>
</organism>
<proteinExistence type="inferred from homology"/>